<accession>Q7YD75</accession>
<name>CYB_PIPAB</name>
<reference key="1">
    <citation type="journal article" date="2004" name="J. Mammal.">
        <title>Molecular systematics of the fishing bat Myotis (Pizonyx) vivesi.</title>
        <authorList>
            <person name="Stadelmann B.Y."/>
            <person name="Herrera L.G."/>
            <person name="Arroyo-Cabrales J."/>
            <person name="Flores-Martinez J.J."/>
            <person name="May B.P."/>
            <person name="Ruedi M."/>
        </authorList>
    </citation>
    <scope>NUCLEOTIDE SEQUENCE [GENOMIC DNA]</scope>
    <source>
        <tissue>Wing</tissue>
    </source>
</reference>
<sequence length="379" mass="42675">MXNIRKSHPLIKIINSSFIDLPAPSNISAWWNFGSLLGICLALQILTGLFLAMHYTSDTATAFSSVTHICRDVNYGWILRYLHANGASMFFICLYLHVGRGLYYGSYLFKETWNMGVILLFAVMATAFMGYVLPWGQMSFWGATVITNLLSAVPYIGTDLVEWIWGGFSVDKATLTRFFAFHFVLPFIISALVMVHLLFLHETGSNNPTGIPSDMDMIPFHPYYTIKDILGLFLMILALLSLVLFSPDMLGDPDNYTPANPLSTPPHIKPEWYFLFAXAILRSIPNKLGGVLALVLSILILIIIPLLHTSKQRSMTFRPLSQCLFWLLTADLLTLTWIGGQPVEHPYVIIGQLASILYFMIIIVIMPLASLTENYLLKW</sequence>
<proteinExistence type="inferred from homology"/>
<geneLocation type="mitochondrion"/>
<protein>
    <recommendedName>
        <fullName>Cytochrome b</fullName>
    </recommendedName>
    <alternativeName>
        <fullName>Complex III subunit 3</fullName>
    </alternativeName>
    <alternativeName>
        <fullName>Complex III subunit III</fullName>
    </alternativeName>
    <alternativeName>
        <fullName>Cytochrome b-c1 complex subunit 3</fullName>
    </alternativeName>
    <alternativeName>
        <fullName>Ubiquinol-cytochrome-c reductase complex cytochrome b subunit</fullName>
    </alternativeName>
</protein>
<gene>
    <name type="primary">MT-CYB</name>
    <name type="synonym">COB</name>
    <name type="synonym">CYTB</name>
    <name type="synonym">MTCYB</name>
</gene>
<comment type="function">
    <text evidence="2">Component of the ubiquinol-cytochrome c reductase complex (complex III or cytochrome b-c1 complex) that is part of the mitochondrial respiratory chain. The b-c1 complex mediates electron transfer from ubiquinol to cytochrome c. Contributes to the generation of a proton gradient across the mitochondrial membrane that is then used for ATP synthesis.</text>
</comment>
<comment type="cofactor">
    <cofactor evidence="2">
        <name>heme b</name>
        <dbReference type="ChEBI" id="CHEBI:60344"/>
    </cofactor>
    <text evidence="2">Binds 2 heme b groups non-covalently.</text>
</comment>
<comment type="subunit">
    <text evidence="2">The cytochrome bc1 complex contains 11 subunits: 3 respiratory subunits (MT-CYB, CYC1 and UQCRFS1), 2 core proteins (UQCRC1 and UQCRC2) and 6 low-molecular weight proteins (UQCRH/QCR6, UQCRB/QCR7, UQCRQ/QCR8, UQCR10/QCR9, UQCR11/QCR10 and a cleavage product of UQCRFS1). This cytochrome bc1 complex then forms a dimer.</text>
</comment>
<comment type="subcellular location">
    <subcellularLocation>
        <location evidence="2">Mitochondrion inner membrane</location>
        <topology evidence="2">Multi-pass membrane protein</topology>
    </subcellularLocation>
</comment>
<comment type="miscellaneous">
    <text evidence="1">Heme 1 (or BL or b562) is low-potential and absorbs at about 562 nm, and heme 2 (or BH or b566) is high-potential and absorbs at about 566 nm.</text>
</comment>
<comment type="similarity">
    <text evidence="3 4">Belongs to the cytochrome b family.</text>
</comment>
<comment type="caution">
    <text evidence="2">The full-length protein contains only eight transmembrane helices, not nine as predicted by bioinformatics tools.</text>
</comment>
<keyword id="KW-0249">Electron transport</keyword>
<keyword id="KW-0349">Heme</keyword>
<keyword id="KW-0408">Iron</keyword>
<keyword id="KW-0472">Membrane</keyword>
<keyword id="KW-0479">Metal-binding</keyword>
<keyword id="KW-0496">Mitochondrion</keyword>
<keyword id="KW-0999">Mitochondrion inner membrane</keyword>
<keyword id="KW-0679">Respiratory chain</keyword>
<keyword id="KW-0812">Transmembrane</keyword>
<keyword id="KW-1133">Transmembrane helix</keyword>
<keyword id="KW-0813">Transport</keyword>
<keyword id="KW-0830">Ubiquinone</keyword>
<organism>
    <name type="scientific">Pipistrellus abramus</name>
    <name type="common">Japanese pipistrelle</name>
    <name type="synonym">Pipistrellus javanicus abramus</name>
    <dbReference type="NCBI Taxonomy" id="105295"/>
    <lineage>
        <taxon>Eukaryota</taxon>
        <taxon>Metazoa</taxon>
        <taxon>Chordata</taxon>
        <taxon>Craniata</taxon>
        <taxon>Vertebrata</taxon>
        <taxon>Euteleostomi</taxon>
        <taxon>Mammalia</taxon>
        <taxon>Eutheria</taxon>
        <taxon>Laurasiatheria</taxon>
        <taxon>Chiroptera</taxon>
        <taxon>Yangochiroptera</taxon>
        <taxon>Vespertilionidae</taxon>
        <taxon>Pipistrellus</taxon>
    </lineage>
</organism>
<evidence type="ECO:0000250" key="1"/>
<evidence type="ECO:0000250" key="2">
    <source>
        <dbReference type="UniProtKB" id="P00157"/>
    </source>
</evidence>
<evidence type="ECO:0000255" key="3">
    <source>
        <dbReference type="PROSITE-ProRule" id="PRU00967"/>
    </source>
</evidence>
<evidence type="ECO:0000255" key="4">
    <source>
        <dbReference type="PROSITE-ProRule" id="PRU00968"/>
    </source>
</evidence>
<feature type="chain" id="PRO_0000061399" description="Cytochrome b">
    <location>
        <begin position="1"/>
        <end position="379"/>
    </location>
</feature>
<feature type="transmembrane region" description="Helical" evidence="2">
    <location>
        <begin position="33"/>
        <end position="53"/>
    </location>
</feature>
<feature type="transmembrane region" description="Helical" evidence="2">
    <location>
        <begin position="77"/>
        <end position="98"/>
    </location>
</feature>
<feature type="transmembrane region" description="Helical" evidence="2">
    <location>
        <begin position="113"/>
        <end position="133"/>
    </location>
</feature>
<feature type="transmembrane region" description="Helical" evidence="2">
    <location>
        <begin position="178"/>
        <end position="198"/>
    </location>
</feature>
<feature type="transmembrane region" description="Helical" evidence="2">
    <location>
        <begin position="226"/>
        <end position="246"/>
    </location>
</feature>
<feature type="transmembrane region" description="Helical" evidence="2">
    <location>
        <begin position="288"/>
        <end position="308"/>
    </location>
</feature>
<feature type="transmembrane region" description="Helical" evidence="2">
    <location>
        <begin position="320"/>
        <end position="340"/>
    </location>
</feature>
<feature type="transmembrane region" description="Helical" evidence="2">
    <location>
        <begin position="347"/>
        <end position="367"/>
    </location>
</feature>
<feature type="binding site" description="axial binding residue" evidence="2">
    <location>
        <position position="83"/>
    </location>
    <ligand>
        <name>heme b</name>
        <dbReference type="ChEBI" id="CHEBI:60344"/>
        <label>b562</label>
    </ligand>
    <ligandPart>
        <name>Fe</name>
        <dbReference type="ChEBI" id="CHEBI:18248"/>
    </ligandPart>
</feature>
<feature type="binding site" description="axial binding residue" evidence="2">
    <location>
        <position position="97"/>
    </location>
    <ligand>
        <name>heme b</name>
        <dbReference type="ChEBI" id="CHEBI:60344"/>
        <label>b566</label>
    </ligand>
    <ligandPart>
        <name>Fe</name>
        <dbReference type="ChEBI" id="CHEBI:18248"/>
    </ligandPart>
</feature>
<feature type="binding site" description="axial binding residue" evidence="2">
    <location>
        <position position="182"/>
    </location>
    <ligand>
        <name>heme b</name>
        <dbReference type="ChEBI" id="CHEBI:60344"/>
        <label>b562</label>
    </ligand>
    <ligandPart>
        <name>Fe</name>
        <dbReference type="ChEBI" id="CHEBI:18248"/>
    </ligandPart>
</feature>
<feature type="binding site" description="axial binding residue" evidence="2">
    <location>
        <position position="196"/>
    </location>
    <ligand>
        <name>heme b</name>
        <dbReference type="ChEBI" id="CHEBI:60344"/>
        <label>b566</label>
    </ligand>
    <ligandPart>
        <name>Fe</name>
        <dbReference type="ChEBI" id="CHEBI:18248"/>
    </ligandPart>
</feature>
<feature type="binding site" evidence="2">
    <location>
        <position position="201"/>
    </location>
    <ligand>
        <name>a ubiquinone</name>
        <dbReference type="ChEBI" id="CHEBI:16389"/>
    </ligand>
</feature>
<dbReference type="EMBL" id="AJ504448">
    <property type="protein sequence ID" value="CAD43206.1"/>
    <property type="molecule type" value="Genomic_DNA"/>
</dbReference>
<dbReference type="GO" id="GO:0005743">
    <property type="term" value="C:mitochondrial inner membrane"/>
    <property type="evidence" value="ECO:0007669"/>
    <property type="project" value="UniProtKB-SubCell"/>
</dbReference>
<dbReference type="GO" id="GO:0045275">
    <property type="term" value="C:respiratory chain complex III"/>
    <property type="evidence" value="ECO:0007669"/>
    <property type="project" value="InterPro"/>
</dbReference>
<dbReference type="GO" id="GO:0046872">
    <property type="term" value="F:metal ion binding"/>
    <property type="evidence" value="ECO:0007669"/>
    <property type="project" value="UniProtKB-KW"/>
</dbReference>
<dbReference type="GO" id="GO:0008121">
    <property type="term" value="F:ubiquinol-cytochrome-c reductase activity"/>
    <property type="evidence" value="ECO:0007669"/>
    <property type="project" value="InterPro"/>
</dbReference>
<dbReference type="GO" id="GO:0006122">
    <property type="term" value="P:mitochondrial electron transport, ubiquinol to cytochrome c"/>
    <property type="evidence" value="ECO:0007669"/>
    <property type="project" value="TreeGrafter"/>
</dbReference>
<dbReference type="CDD" id="cd00290">
    <property type="entry name" value="cytochrome_b_C"/>
    <property type="match status" value="1"/>
</dbReference>
<dbReference type="CDD" id="cd00284">
    <property type="entry name" value="Cytochrome_b_N"/>
    <property type="match status" value="1"/>
</dbReference>
<dbReference type="FunFam" id="1.20.810.10:FF:000002">
    <property type="entry name" value="Cytochrome b"/>
    <property type="match status" value="1"/>
</dbReference>
<dbReference type="Gene3D" id="1.20.810.10">
    <property type="entry name" value="Cytochrome Bc1 Complex, Chain C"/>
    <property type="match status" value="1"/>
</dbReference>
<dbReference type="InterPro" id="IPR005798">
    <property type="entry name" value="Cyt_b/b6_C"/>
</dbReference>
<dbReference type="InterPro" id="IPR036150">
    <property type="entry name" value="Cyt_b/b6_C_sf"/>
</dbReference>
<dbReference type="InterPro" id="IPR005797">
    <property type="entry name" value="Cyt_b/b6_N"/>
</dbReference>
<dbReference type="InterPro" id="IPR027387">
    <property type="entry name" value="Cytb/b6-like_sf"/>
</dbReference>
<dbReference type="InterPro" id="IPR030689">
    <property type="entry name" value="Cytochrome_b"/>
</dbReference>
<dbReference type="InterPro" id="IPR048260">
    <property type="entry name" value="Cytochrome_b_C_euk/bac"/>
</dbReference>
<dbReference type="InterPro" id="IPR048259">
    <property type="entry name" value="Cytochrome_b_N_euk/bac"/>
</dbReference>
<dbReference type="InterPro" id="IPR016174">
    <property type="entry name" value="Di-haem_cyt_TM"/>
</dbReference>
<dbReference type="PANTHER" id="PTHR19271">
    <property type="entry name" value="CYTOCHROME B"/>
    <property type="match status" value="1"/>
</dbReference>
<dbReference type="PANTHER" id="PTHR19271:SF16">
    <property type="entry name" value="CYTOCHROME B"/>
    <property type="match status" value="1"/>
</dbReference>
<dbReference type="Pfam" id="PF00032">
    <property type="entry name" value="Cytochrom_B_C"/>
    <property type="match status" value="1"/>
</dbReference>
<dbReference type="Pfam" id="PF00033">
    <property type="entry name" value="Cytochrome_B"/>
    <property type="match status" value="1"/>
</dbReference>
<dbReference type="PIRSF" id="PIRSF038885">
    <property type="entry name" value="COB"/>
    <property type="match status" value="1"/>
</dbReference>
<dbReference type="SUPFAM" id="SSF81648">
    <property type="entry name" value="a domain/subunit of cytochrome bc1 complex (Ubiquinol-cytochrome c reductase)"/>
    <property type="match status" value="1"/>
</dbReference>
<dbReference type="SUPFAM" id="SSF81342">
    <property type="entry name" value="Transmembrane di-heme cytochromes"/>
    <property type="match status" value="1"/>
</dbReference>
<dbReference type="PROSITE" id="PS51003">
    <property type="entry name" value="CYTB_CTER"/>
    <property type="match status" value="1"/>
</dbReference>
<dbReference type="PROSITE" id="PS51002">
    <property type="entry name" value="CYTB_NTER"/>
    <property type="match status" value="1"/>
</dbReference>